<name>TAL_XANE5</name>
<feature type="chain" id="PRO_0000230978" description="Transaldolase">
    <location>
        <begin position="1"/>
        <end position="322"/>
    </location>
</feature>
<feature type="active site" description="Schiff-base intermediate with substrate" evidence="2">
    <location>
        <position position="136"/>
    </location>
</feature>
<gene>
    <name evidence="2" type="primary">tal</name>
    <name type="ordered locus">XCV0939</name>
</gene>
<accession>Q3BX43</accession>
<sequence>MTASPSKLAQLRELSVVVADTGDYDAIKRLKPVDCTTNPTLVKKALDLPVYADLIERELAWGREHGGDDRTATVNEVADRLTIGVGVKLAELVPGRVSTEVDADLAHDTQATIAKARKFVAMYAERGVSKDKILIKIAATWEGIEAARQLQKEGIDCNLTLIFNRSQALACAEAGVFLISPFVGRILDYYVAQGQTPASIDEDPGVVFVRTVYNEFKQRGSSTVVMGASFRSTAQIEALAGCDRLTISPDLLEKLDAEHGELPRKLSPAKADNAQFTPIDSDSFASGLAADPMATEKLAGGIDTFAKDLHALRKTIADKLAG</sequence>
<comment type="function">
    <text evidence="2">Transaldolase is important for the balance of metabolites in the pentose-phosphate pathway.</text>
</comment>
<comment type="catalytic activity">
    <reaction evidence="2">
        <text>D-sedoheptulose 7-phosphate + D-glyceraldehyde 3-phosphate = D-erythrose 4-phosphate + beta-D-fructose 6-phosphate</text>
        <dbReference type="Rhea" id="RHEA:17053"/>
        <dbReference type="ChEBI" id="CHEBI:16897"/>
        <dbReference type="ChEBI" id="CHEBI:57483"/>
        <dbReference type="ChEBI" id="CHEBI:57634"/>
        <dbReference type="ChEBI" id="CHEBI:59776"/>
        <dbReference type="EC" id="2.2.1.2"/>
    </reaction>
</comment>
<comment type="pathway">
    <text evidence="2">Carbohydrate degradation; pentose phosphate pathway; D-glyceraldehyde 3-phosphate and beta-D-fructose 6-phosphate from D-ribose 5-phosphate and D-xylulose 5-phosphate (non-oxidative stage): step 2/3.</text>
</comment>
<comment type="subunit">
    <text evidence="1">Homodimer.</text>
</comment>
<comment type="subcellular location">
    <subcellularLocation>
        <location evidence="2">Cytoplasm</location>
    </subcellularLocation>
</comment>
<comment type="similarity">
    <text evidence="2">Belongs to the transaldolase family. Type 1 subfamily.</text>
</comment>
<reference key="1">
    <citation type="journal article" date="2005" name="J. Bacteriol.">
        <title>Insights into genome plasticity and pathogenicity of the plant pathogenic Bacterium Xanthomonas campestris pv. vesicatoria revealed by the complete genome sequence.</title>
        <authorList>
            <person name="Thieme F."/>
            <person name="Koebnik R."/>
            <person name="Bekel T."/>
            <person name="Berger C."/>
            <person name="Boch J."/>
            <person name="Buettner D."/>
            <person name="Caldana C."/>
            <person name="Gaigalat L."/>
            <person name="Goesmann A."/>
            <person name="Kay S."/>
            <person name="Kirchner O."/>
            <person name="Lanz C."/>
            <person name="Linke B."/>
            <person name="McHardy A.C."/>
            <person name="Meyer F."/>
            <person name="Mittenhuber G."/>
            <person name="Nies D.H."/>
            <person name="Niesbach-Kloesgen U."/>
            <person name="Patschkowski T."/>
            <person name="Rueckert C."/>
            <person name="Rupp O."/>
            <person name="Schneiker S."/>
            <person name="Schuster S.C."/>
            <person name="Vorhoelter F.J."/>
            <person name="Weber E."/>
            <person name="Puehler A."/>
            <person name="Bonas U."/>
            <person name="Bartels D."/>
            <person name="Kaiser O."/>
        </authorList>
    </citation>
    <scope>NUCLEOTIDE SEQUENCE [LARGE SCALE GENOMIC DNA]</scope>
    <source>
        <strain>85-10</strain>
    </source>
</reference>
<keyword id="KW-0963">Cytoplasm</keyword>
<keyword id="KW-0570">Pentose shunt</keyword>
<keyword id="KW-0704">Schiff base</keyword>
<keyword id="KW-0808">Transferase</keyword>
<evidence type="ECO:0000250" key="1"/>
<evidence type="ECO:0000255" key="2">
    <source>
        <dbReference type="HAMAP-Rule" id="MF_00492"/>
    </source>
</evidence>
<dbReference type="EC" id="2.2.1.2" evidence="2"/>
<dbReference type="EMBL" id="AM039952">
    <property type="protein sequence ID" value="CAJ22570.1"/>
    <property type="molecule type" value="Genomic_DNA"/>
</dbReference>
<dbReference type="RefSeq" id="WP_011346503.1">
    <property type="nucleotide sequence ID" value="NZ_CP017190.1"/>
</dbReference>
<dbReference type="SMR" id="Q3BX43"/>
<dbReference type="STRING" id="456327.BJD11_18080"/>
<dbReference type="KEGG" id="xcv:XCV0939"/>
<dbReference type="eggNOG" id="COG0176">
    <property type="taxonomic scope" value="Bacteria"/>
</dbReference>
<dbReference type="HOGENOM" id="CLU_047470_0_1_6"/>
<dbReference type="UniPathway" id="UPA00115">
    <property type="reaction ID" value="UER00414"/>
</dbReference>
<dbReference type="Proteomes" id="UP000007069">
    <property type="component" value="Chromosome"/>
</dbReference>
<dbReference type="GO" id="GO:0005829">
    <property type="term" value="C:cytosol"/>
    <property type="evidence" value="ECO:0007669"/>
    <property type="project" value="TreeGrafter"/>
</dbReference>
<dbReference type="GO" id="GO:0004801">
    <property type="term" value="F:transaldolase activity"/>
    <property type="evidence" value="ECO:0000250"/>
    <property type="project" value="UniProtKB"/>
</dbReference>
<dbReference type="GO" id="GO:0005975">
    <property type="term" value="P:carbohydrate metabolic process"/>
    <property type="evidence" value="ECO:0007669"/>
    <property type="project" value="InterPro"/>
</dbReference>
<dbReference type="GO" id="GO:0006098">
    <property type="term" value="P:pentose-phosphate shunt"/>
    <property type="evidence" value="ECO:0007669"/>
    <property type="project" value="UniProtKB-UniRule"/>
</dbReference>
<dbReference type="CDD" id="cd00957">
    <property type="entry name" value="Transaldolase_TalAB"/>
    <property type="match status" value="1"/>
</dbReference>
<dbReference type="FunFam" id="3.20.20.70:FF:000226">
    <property type="entry name" value="Transaldolase"/>
    <property type="match status" value="1"/>
</dbReference>
<dbReference type="Gene3D" id="3.20.20.70">
    <property type="entry name" value="Aldolase class I"/>
    <property type="match status" value="1"/>
</dbReference>
<dbReference type="HAMAP" id="MF_00492">
    <property type="entry name" value="Transaldolase_1"/>
    <property type="match status" value="1"/>
</dbReference>
<dbReference type="InterPro" id="IPR013785">
    <property type="entry name" value="Aldolase_TIM"/>
</dbReference>
<dbReference type="InterPro" id="IPR001585">
    <property type="entry name" value="TAL/FSA"/>
</dbReference>
<dbReference type="InterPro" id="IPR004730">
    <property type="entry name" value="Transaldolase_1"/>
</dbReference>
<dbReference type="InterPro" id="IPR018225">
    <property type="entry name" value="Transaldolase_AS"/>
</dbReference>
<dbReference type="PANTHER" id="PTHR10683">
    <property type="entry name" value="TRANSALDOLASE"/>
    <property type="match status" value="1"/>
</dbReference>
<dbReference type="PANTHER" id="PTHR10683:SF18">
    <property type="entry name" value="TRANSALDOLASE"/>
    <property type="match status" value="1"/>
</dbReference>
<dbReference type="Pfam" id="PF00923">
    <property type="entry name" value="TAL_FSA"/>
    <property type="match status" value="1"/>
</dbReference>
<dbReference type="SUPFAM" id="SSF51569">
    <property type="entry name" value="Aldolase"/>
    <property type="match status" value="1"/>
</dbReference>
<dbReference type="PROSITE" id="PS01054">
    <property type="entry name" value="TRANSALDOLASE_1"/>
    <property type="match status" value="1"/>
</dbReference>
<dbReference type="PROSITE" id="PS00958">
    <property type="entry name" value="TRANSALDOLASE_2"/>
    <property type="match status" value="1"/>
</dbReference>
<organism>
    <name type="scientific">Xanthomonas euvesicatoria pv. vesicatoria (strain 85-10)</name>
    <name type="common">Xanthomonas campestris pv. vesicatoria</name>
    <dbReference type="NCBI Taxonomy" id="316273"/>
    <lineage>
        <taxon>Bacteria</taxon>
        <taxon>Pseudomonadati</taxon>
        <taxon>Pseudomonadota</taxon>
        <taxon>Gammaproteobacteria</taxon>
        <taxon>Lysobacterales</taxon>
        <taxon>Lysobacteraceae</taxon>
        <taxon>Xanthomonas</taxon>
    </lineage>
</organism>
<protein>
    <recommendedName>
        <fullName evidence="2">Transaldolase</fullName>
        <ecNumber evidence="2">2.2.1.2</ecNumber>
    </recommendedName>
</protein>
<proteinExistence type="inferred from homology"/>